<dbReference type="EMBL" id="BC049038">
    <property type="protein sequence ID" value="AAH49038.2"/>
    <property type="molecule type" value="mRNA"/>
</dbReference>
<dbReference type="EMBL" id="BC059509">
    <property type="protein sequence ID" value="AAH59509.1"/>
    <property type="molecule type" value="mRNA"/>
</dbReference>
<dbReference type="RefSeq" id="NP_957026.1">
    <property type="nucleotide sequence ID" value="NM_200732.1"/>
</dbReference>
<dbReference type="PDB" id="7OYA">
    <property type="method" value="EM"/>
    <property type="resolution" value="3.20 A"/>
    <property type="chains" value="V1=1-140"/>
</dbReference>
<dbReference type="PDB" id="7OYB">
    <property type="method" value="EM"/>
    <property type="resolution" value="2.40 A"/>
    <property type="chains" value="V1=1-140"/>
</dbReference>
<dbReference type="PDBsum" id="7OYA"/>
<dbReference type="PDBsum" id="7OYB"/>
<dbReference type="EMDB" id="EMD-13111"/>
<dbReference type="EMDB" id="EMD-13112"/>
<dbReference type="SMR" id="Q6PC14"/>
<dbReference type="FunCoup" id="Q6PC14">
    <property type="interactions" value="1981"/>
</dbReference>
<dbReference type="STRING" id="7955.ENSDARP00000069977"/>
<dbReference type="PaxDb" id="7955-ENSDARP00000069977"/>
<dbReference type="Ensembl" id="ENSDART00000075495">
    <property type="protein sequence ID" value="ENSDARP00000069977"/>
    <property type="gene ID" value="ENSDARG00000053457"/>
</dbReference>
<dbReference type="GeneID" id="336812"/>
<dbReference type="KEGG" id="dre:336812"/>
<dbReference type="AGR" id="ZFIN:ZDB-GENE-030131-8756"/>
<dbReference type="CTD" id="9349"/>
<dbReference type="ZFIN" id="ZDB-GENE-030131-8756">
    <property type="gene designation" value="rpl23"/>
</dbReference>
<dbReference type="eggNOG" id="KOG0901">
    <property type="taxonomic scope" value="Eukaryota"/>
</dbReference>
<dbReference type="HOGENOM" id="CLU_095071_3_0_1"/>
<dbReference type="InParanoid" id="Q6PC14"/>
<dbReference type="OMA" id="MIQMQTR"/>
<dbReference type="OrthoDB" id="407959at2759"/>
<dbReference type="PhylomeDB" id="Q6PC14"/>
<dbReference type="TreeFam" id="TF300913"/>
<dbReference type="Reactome" id="R-DRE-156827">
    <property type="pathway name" value="L13a-mediated translational silencing of Ceruloplasmin expression"/>
</dbReference>
<dbReference type="Reactome" id="R-DRE-1799339">
    <property type="pathway name" value="SRP-dependent cotranslational protein targeting to membrane"/>
</dbReference>
<dbReference type="Reactome" id="R-DRE-72689">
    <property type="pathway name" value="Formation of a pool of free 40S subunits"/>
</dbReference>
<dbReference type="Reactome" id="R-DRE-975956">
    <property type="pathway name" value="Nonsense Mediated Decay (NMD) independent of the Exon Junction Complex (EJC)"/>
</dbReference>
<dbReference type="Reactome" id="R-DRE-975957">
    <property type="pathway name" value="Nonsense Mediated Decay (NMD) enhanced by the Exon Junction Complex (EJC)"/>
</dbReference>
<dbReference type="PRO" id="PR:Q6PC14"/>
<dbReference type="Proteomes" id="UP000000437">
    <property type="component" value="Chromosome 3"/>
</dbReference>
<dbReference type="Bgee" id="ENSDARG00000053457">
    <property type="expression patterns" value="Expressed in tail bud paraxial mesoderm and 31 other cell types or tissues"/>
</dbReference>
<dbReference type="GO" id="GO:0022625">
    <property type="term" value="C:cytosolic large ribosomal subunit"/>
    <property type="evidence" value="ECO:0000318"/>
    <property type="project" value="GO_Central"/>
</dbReference>
<dbReference type="GO" id="GO:0070180">
    <property type="term" value="F:large ribosomal subunit rRNA binding"/>
    <property type="evidence" value="ECO:0000318"/>
    <property type="project" value="GO_Central"/>
</dbReference>
<dbReference type="GO" id="GO:0003735">
    <property type="term" value="F:structural constituent of ribosome"/>
    <property type="evidence" value="ECO:0000318"/>
    <property type="project" value="GO_Central"/>
</dbReference>
<dbReference type="GO" id="GO:0006412">
    <property type="term" value="P:translation"/>
    <property type="evidence" value="ECO:0007669"/>
    <property type="project" value="InterPro"/>
</dbReference>
<dbReference type="CDD" id="cd00337">
    <property type="entry name" value="Ribosomal_uL14"/>
    <property type="match status" value="1"/>
</dbReference>
<dbReference type="FunFam" id="2.40.150.20:FF:000003">
    <property type="entry name" value="60S ribosomal protein L23"/>
    <property type="match status" value="1"/>
</dbReference>
<dbReference type="Gene3D" id="2.40.150.20">
    <property type="entry name" value="Ribosomal protein L14"/>
    <property type="match status" value="1"/>
</dbReference>
<dbReference type="HAMAP" id="MF_01367">
    <property type="entry name" value="Ribosomal_uL14"/>
    <property type="match status" value="1"/>
</dbReference>
<dbReference type="InterPro" id="IPR000218">
    <property type="entry name" value="Ribosomal_uL14"/>
</dbReference>
<dbReference type="InterPro" id="IPR019972">
    <property type="entry name" value="Ribosomal_uL14_CS"/>
</dbReference>
<dbReference type="InterPro" id="IPR036853">
    <property type="entry name" value="Ribosomal_uL14_sf"/>
</dbReference>
<dbReference type="NCBIfam" id="NF006344">
    <property type="entry name" value="PRK08571.1"/>
    <property type="match status" value="1"/>
</dbReference>
<dbReference type="PANTHER" id="PTHR11761">
    <property type="entry name" value="50S/60S RIBOSOMAL PROTEIN L14/L23"/>
    <property type="match status" value="1"/>
</dbReference>
<dbReference type="PANTHER" id="PTHR11761:SF8">
    <property type="entry name" value="LARGE RIBOSOMAL SUBUNIT PROTEIN UL14"/>
    <property type="match status" value="1"/>
</dbReference>
<dbReference type="Pfam" id="PF00238">
    <property type="entry name" value="Ribosomal_L14"/>
    <property type="match status" value="1"/>
</dbReference>
<dbReference type="SMART" id="SM01374">
    <property type="entry name" value="Ribosomal_L14"/>
    <property type="match status" value="1"/>
</dbReference>
<dbReference type="SUPFAM" id="SSF50193">
    <property type="entry name" value="Ribosomal protein L14"/>
    <property type="match status" value="1"/>
</dbReference>
<dbReference type="PROSITE" id="PS00049">
    <property type="entry name" value="RIBOSOMAL_L14"/>
    <property type="match status" value="1"/>
</dbReference>
<reference key="1">
    <citation type="submission" date="2003-10" db="EMBL/GenBank/DDBJ databases">
        <authorList>
            <consortium name="NIH - Zebrafish Gene Collection (ZGC) project"/>
        </authorList>
    </citation>
    <scope>NUCLEOTIDE SEQUENCE [LARGE SCALE MRNA]</scope>
    <source>
        <strain>SJD</strain>
        <tissue>Retina</tissue>
    </source>
</reference>
<evidence type="ECO:0000250" key="1">
    <source>
        <dbReference type="UniProtKB" id="P62829"/>
    </source>
</evidence>
<evidence type="ECO:0000305" key="2"/>
<proteinExistence type="evidence at protein level"/>
<name>RL23_DANRE</name>
<keyword id="KW-0002">3D-structure</keyword>
<keyword id="KW-0963">Cytoplasm</keyword>
<keyword id="KW-1185">Reference proteome</keyword>
<keyword id="KW-0687">Ribonucleoprotein</keyword>
<keyword id="KW-0689">Ribosomal protein</keyword>
<organism>
    <name type="scientific">Danio rerio</name>
    <name type="common">Zebrafish</name>
    <name type="synonym">Brachydanio rerio</name>
    <dbReference type="NCBI Taxonomy" id="7955"/>
    <lineage>
        <taxon>Eukaryota</taxon>
        <taxon>Metazoa</taxon>
        <taxon>Chordata</taxon>
        <taxon>Craniata</taxon>
        <taxon>Vertebrata</taxon>
        <taxon>Euteleostomi</taxon>
        <taxon>Actinopterygii</taxon>
        <taxon>Neopterygii</taxon>
        <taxon>Teleostei</taxon>
        <taxon>Ostariophysi</taxon>
        <taxon>Cypriniformes</taxon>
        <taxon>Danionidae</taxon>
        <taxon>Danioninae</taxon>
        <taxon>Danio</taxon>
    </lineage>
</organism>
<sequence>MSKRGRGGSSGAKFRISLGLPVGAVINCADNTGAKNLYIISVKGIKGRLNRLPSAGVGDMVMATVKKGKPELRKKVHPAVVIRQRKSYRRKDGVFLYFEDNAGVIVNNKGEMKGSAITGPVAKECADLWPRIASNAGSIA</sequence>
<feature type="chain" id="PRO_0000128617" description="Large ribosomal subunit protein uL14">
    <location>
        <begin position="1"/>
        <end position="140"/>
    </location>
</feature>
<gene>
    <name type="primary">rpl23</name>
    <name type="ORF">zgc:73149</name>
</gene>
<protein>
    <recommendedName>
        <fullName evidence="2">Large ribosomal subunit protein uL14</fullName>
    </recommendedName>
    <alternativeName>
        <fullName>60S ribosomal protein L23</fullName>
    </alternativeName>
</protein>
<comment type="function">
    <text evidence="1">Component of the large ribosomal subunit. The ribosome is a large ribonucleoprotein complex responsible for the synthesis of proteins in the cell.</text>
</comment>
<comment type="subunit">
    <text evidence="1">Component of the large ribosomal subunit.</text>
</comment>
<comment type="subcellular location">
    <subcellularLocation>
        <location evidence="1">Cytoplasm</location>
    </subcellularLocation>
</comment>
<comment type="similarity">
    <text evidence="2">Belongs to the universal ribosomal protein uL14 family.</text>
</comment>
<accession>Q6PC14</accession>
<accession>Q7ZWJ5</accession>